<comment type="function">
    <text evidence="1">Involved in mRNA degradation. Catalyzes the phosphorolysis of single-stranded polyribonucleotides processively in the 3'- to 5'-direction.</text>
</comment>
<comment type="catalytic activity">
    <reaction evidence="1">
        <text>RNA(n+1) + phosphate = RNA(n) + a ribonucleoside 5'-diphosphate</text>
        <dbReference type="Rhea" id="RHEA:22096"/>
        <dbReference type="Rhea" id="RHEA-COMP:14527"/>
        <dbReference type="Rhea" id="RHEA-COMP:17342"/>
        <dbReference type="ChEBI" id="CHEBI:43474"/>
        <dbReference type="ChEBI" id="CHEBI:57930"/>
        <dbReference type="ChEBI" id="CHEBI:140395"/>
        <dbReference type="EC" id="2.7.7.8"/>
    </reaction>
</comment>
<comment type="cofactor">
    <cofactor evidence="1">
        <name>Mg(2+)</name>
        <dbReference type="ChEBI" id="CHEBI:18420"/>
    </cofactor>
</comment>
<comment type="subcellular location">
    <subcellularLocation>
        <location evidence="1">Cytoplasm</location>
    </subcellularLocation>
</comment>
<comment type="similarity">
    <text evidence="1">Belongs to the polyribonucleotide nucleotidyltransferase family.</text>
</comment>
<evidence type="ECO:0000255" key="1">
    <source>
        <dbReference type="HAMAP-Rule" id="MF_01595"/>
    </source>
</evidence>
<evidence type="ECO:0000256" key="2">
    <source>
        <dbReference type="SAM" id="MobiDB-lite"/>
    </source>
</evidence>
<proteinExistence type="inferred from homology"/>
<name>PNP_METRJ</name>
<protein>
    <recommendedName>
        <fullName evidence="1">Polyribonucleotide nucleotidyltransferase</fullName>
        <ecNumber evidence="1">2.7.7.8</ecNumber>
    </recommendedName>
    <alternativeName>
        <fullName evidence="1">Polynucleotide phosphorylase</fullName>
        <shortName evidence="1">PNPase</shortName>
    </alternativeName>
</protein>
<accession>B1LZQ1</accession>
<gene>
    <name evidence="1" type="primary">pnp</name>
    <name type="ordered locus">Mrad2831_0939</name>
</gene>
<organism>
    <name type="scientific">Methylobacterium radiotolerans (strain ATCC 27329 / DSM 1819 / JCM 2831 / NBRC 15690 / NCIMB 10815 / 0-1)</name>
    <dbReference type="NCBI Taxonomy" id="426355"/>
    <lineage>
        <taxon>Bacteria</taxon>
        <taxon>Pseudomonadati</taxon>
        <taxon>Pseudomonadota</taxon>
        <taxon>Alphaproteobacteria</taxon>
        <taxon>Hyphomicrobiales</taxon>
        <taxon>Methylobacteriaceae</taxon>
        <taxon>Methylobacterium</taxon>
    </lineage>
</organism>
<dbReference type="EC" id="2.7.7.8" evidence="1"/>
<dbReference type="EMBL" id="CP001001">
    <property type="protein sequence ID" value="ACB22949.1"/>
    <property type="molecule type" value="Genomic_DNA"/>
</dbReference>
<dbReference type="RefSeq" id="WP_012317942.1">
    <property type="nucleotide sequence ID" value="NC_010505.1"/>
</dbReference>
<dbReference type="SMR" id="B1LZQ1"/>
<dbReference type="STRING" id="426355.Mrad2831_0939"/>
<dbReference type="GeneID" id="6136956"/>
<dbReference type="KEGG" id="mrd:Mrad2831_0939"/>
<dbReference type="eggNOG" id="COG1185">
    <property type="taxonomic scope" value="Bacteria"/>
</dbReference>
<dbReference type="HOGENOM" id="CLU_004217_2_2_5"/>
<dbReference type="OrthoDB" id="9804305at2"/>
<dbReference type="Proteomes" id="UP000006589">
    <property type="component" value="Chromosome"/>
</dbReference>
<dbReference type="GO" id="GO:0005829">
    <property type="term" value="C:cytosol"/>
    <property type="evidence" value="ECO:0007669"/>
    <property type="project" value="TreeGrafter"/>
</dbReference>
<dbReference type="GO" id="GO:0000175">
    <property type="term" value="F:3'-5'-RNA exonuclease activity"/>
    <property type="evidence" value="ECO:0007669"/>
    <property type="project" value="TreeGrafter"/>
</dbReference>
<dbReference type="GO" id="GO:0000287">
    <property type="term" value="F:magnesium ion binding"/>
    <property type="evidence" value="ECO:0007669"/>
    <property type="project" value="UniProtKB-UniRule"/>
</dbReference>
<dbReference type="GO" id="GO:0004654">
    <property type="term" value="F:polyribonucleotide nucleotidyltransferase activity"/>
    <property type="evidence" value="ECO:0007669"/>
    <property type="project" value="UniProtKB-UniRule"/>
</dbReference>
<dbReference type="GO" id="GO:0003723">
    <property type="term" value="F:RNA binding"/>
    <property type="evidence" value="ECO:0007669"/>
    <property type="project" value="UniProtKB-UniRule"/>
</dbReference>
<dbReference type="GO" id="GO:0006402">
    <property type="term" value="P:mRNA catabolic process"/>
    <property type="evidence" value="ECO:0007669"/>
    <property type="project" value="UniProtKB-UniRule"/>
</dbReference>
<dbReference type="GO" id="GO:0006396">
    <property type="term" value="P:RNA processing"/>
    <property type="evidence" value="ECO:0007669"/>
    <property type="project" value="InterPro"/>
</dbReference>
<dbReference type="CDD" id="cd02393">
    <property type="entry name" value="KH-I_PNPase"/>
    <property type="match status" value="1"/>
</dbReference>
<dbReference type="CDD" id="cd11363">
    <property type="entry name" value="RNase_PH_PNPase_1"/>
    <property type="match status" value="1"/>
</dbReference>
<dbReference type="CDD" id="cd11364">
    <property type="entry name" value="RNase_PH_PNPase_2"/>
    <property type="match status" value="1"/>
</dbReference>
<dbReference type="CDD" id="cd04472">
    <property type="entry name" value="S1_PNPase"/>
    <property type="match status" value="1"/>
</dbReference>
<dbReference type="FunFam" id="2.40.50.140:FF:000107">
    <property type="entry name" value="Polyribonucleotide nucleotidyltransferase"/>
    <property type="match status" value="1"/>
</dbReference>
<dbReference type="FunFam" id="3.30.1370.10:FF:000001">
    <property type="entry name" value="Polyribonucleotide nucleotidyltransferase"/>
    <property type="match status" value="1"/>
</dbReference>
<dbReference type="FunFam" id="3.30.230.70:FF:000001">
    <property type="entry name" value="Polyribonucleotide nucleotidyltransferase"/>
    <property type="match status" value="1"/>
</dbReference>
<dbReference type="FunFam" id="3.30.230.70:FF:000002">
    <property type="entry name" value="Polyribonucleotide nucleotidyltransferase"/>
    <property type="match status" value="1"/>
</dbReference>
<dbReference type="Gene3D" id="3.30.230.70">
    <property type="entry name" value="GHMP Kinase, N-terminal domain"/>
    <property type="match status" value="2"/>
</dbReference>
<dbReference type="Gene3D" id="3.30.1370.10">
    <property type="entry name" value="K Homology domain, type 1"/>
    <property type="match status" value="1"/>
</dbReference>
<dbReference type="Gene3D" id="2.40.50.140">
    <property type="entry name" value="Nucleic acid-binding proteins"/>
    <property type="match status" value="1"/>
</dbReference>
<dbReference type="HAMAP" id="MF_01595">
    <property type="entry name" value="PNPase"/>
    <property type="match status" value="1"/>
</dbReference>
<dbReference type="InterPro" id="IPR001247">
    <property type="entry name" value="ExoRNase_PH_dom1"/>
</dbReference>
<dbReference type="InterPro" id="IPR015847">
    <property type="entry name" value="ExoRNase_PH_dom2"/>
</dbReference>
<dbReference type="InterPro" id="IPR036345">
    <property type="entry name" value="ExoRNase_PH_dom2_sf"/>
</dbReference>
<dbReference type="InterPro" id="IPR004087">
    <property type="entry name" value="KH_dom"/>
</dbReference>
<dbReference type="InterPro" id="IPR004088">
    <property type="entry name" value="KH_dom_type_1"/>
</dbReference>
<dbReference type="InterPro" id="IPR036612">
    <property type="entry name" value="KH_dom_type_1_sf"/>
</dbReference>
<dbReference type="InterPro" id="IPR012340">
    <property type="entry name" value="NA-bd_OB-fold"/>
</dbReference>
<dbReference type="InterPro" id="IPR012162">
    <property type="entry name" value="PNPase"/>
</dbReference>
<dbReference type="InterPro" id="IPR027408">
    <property type="entry name" value="PNPase/RNase_PH_dom_sf"/>
</dbReference>
<dbReference type="InterPro" id="IPR015848">
    <property type="entry name" value="PNPase_PH_RNA-bd_bac/org-type"/>
</dbReference>
<dbReference type="InterPro" id="IPR020568">
    <property type="entry name" value="Ribosomal_Su5_D2-typ_SF"/>
</dbReference>
<dbReference type="InterPro" id="IPR003029">
    <property type="entry name" value="S1_domain"/>
</dbReference>
<dbReference type="NCBIfam" id="TIGR03591">
    <property type="entry name" value="polynuc_phos"/>
    <property type="match status" value="1"/>
</dbReference>
<dbReference type="NCBIfam" id="NF008805">
    <property type="entry name" value="PRK11824.1"/>
    <property type="match status" value="1"/>
</dbReference>
<dbReference type="PANTHER" id="PTHR11252">
    <property type="entry name" value="POLYRIBONUCLEOTIDE NUCLEOTIDYLTRANSFERASE"/>
    <property type="match status" value="1"/>
</dbReference>
<dbReference type="PANTHER" id="PTHR11252:SF0">
    <property type="entry name" value="POLYRIBONUCLEOTIDE NUCLEOTIDYLTRANSFERASE 1, MITOCHONDRIAL"/>
    <property type="match status" value="1"/>
</dbReference>
<dbReference type="Pfam" id="PF00013">
    <property type="entry name" value="KH_1"/>
    <property type="match status" value="1"/>
</dbReference>
<dbReference type="Pfam" id="PF03726">
    <property type="entry name" value="PNPase"/>
    <property type="match status" value="1"/>
</dbReference>
<dbReference type="Pfam" id="PF01138">
    <property type="entry name" value="RNase_PH"/>
    <property type="match status" value="2"/>
</dbReference>
<dbReference type="Pfam" id="PF03725">
    <property type="entry name" value="RNase_PH_C"/>
    <property type="match status" value="2"/>
</dbReference>
<dbReference type="Pfam" id="PF00575">
    <property type="entry name" value="S1"/>
    <property type="match status" value="1"/>
</dbReference>
<dbReference type="PIRSF" id="PIRSF005499">
    <property type="entry name" value="PNPase"/>
    <property type="match status" value="1"/>
</dbReference>
<dbReference type="SMART" id="SM00322">
    <property type="entry name" value="KH"/>
    <property type="match status" value="1"/>
</dbReference>
<dbReference type="SMART" id="SM00316">
    <property type="entry name" value="S1"/>
    <property type="match status" value="1"/>
</dbReference>
<dbReference type="SUPFAM" id="SSF54791">
    <property type="entry name" value="Eukaryotic type KH-domain (KH-domain type I)"/>
    <property type="match status" value="1"/>
</dbReference>
<dbReference type="SUPFAM" id="SSF50249">
    <property type="entry name" value="Nucleic acid-binding proteins"/>
    <property type="match status" value="1"/>
</dbReference>
<dbReference type="SUPFAM" id="SSF55666">
    <property type="entry name" value="Ribonuclease PH domain 2-like"/>
    <property type="match status" value="2"/>
</dbReference>
<dbReference type="SUPFAM" id="SSF54211">
    <property type="entry name" value="Ribosomal protein S5 domain 2-like"/>
    <property type="match status" value="2"/>
</dbReference>
<dbReference type="PROSITE" id="PS50084">
    <property type="entry name" value="KH_TYPE_1"/>
    <property type="match status" value="1"/>
</dbReference>
<dbReference type="PROSITE" id="PS50126">
    <property type="entry name" value="S1"/>
    <property type="match status" value="1"/>
</dbReference>
<feature type="chain" id="PRO_1000147931" description="Polyribonucleotide nucleotidyltransferase">
    <location>
        <begin position="1"/>
        <end position="739"/>
    </location>
</feature>
<feature type="domain" description="KH" evidence="1">
    <location>
        <begin position="554"/>
        <end position="613"/>
    </location>
</feature>
<feature type="domain" description="S1 motif" evidence="1">
    <location>
        <begin position="623"/>
        <end position="691"/>
    </location>
</feature>
<feature type="region of interest" description="Disordered" evidence="2">
    <location>
        <begin position="694"/>
        <end position="739"/>
    </location>
</feature>
<feature type="compositionally biased region" description="Basic and acidic residues" evidence="2">
    <location>
        <begin position="701"/>
        <end position="739"/>
    </location>
</feature>
<feature type="binding site" evidence="1">
    <location>
        <position position="487"/>
    </location>
    <ligand>
        <name>Mg(2+)</name>
        <dbReference type="ChEBI" id="CHEBI:18420"/>
    </ligand>
</feature>
<feature type="binding site" evidence="1">
    <location>
        <position position="493"/>
    </location>
    <ligand>
        <name>Mg(2+)</name>
        <dbReference type="ChEBI" id="CHEBI:18420"/>
    </ligand>
</feature>
<reference key="1">
    <citation type="submission" date="2008-03" db="EMBL/GenBank/DDBJ databases">
        <title>Complete sequence of chromosome of Methylobacterium radiotolerans JCM 2831.</title>
        <authorList>
            <consortium name="US DOE Joint Genome Institute"/>
            <person name="Copeland A."/>
            <person name="Lucas S."/>
            <person name="Lapidus A."/>
            <person name="Glavina del Rio T."/>
            <person name="Dalin E."/>
            <person name="Tice H."/>
            <person name="Bruce D."/>
            <person name="Goodwin L."/>
            <person name="Pitluck S."/>
            <person name="Kiss H."/>
            <person name="Brettin T."/>
            <person name="Detter J.C."/>
            <person name="Han C."/>
            <person name="Kuske C.R."/>
            <person name="Schmutz J."/>
            <person name="Larimer F."/>
            <person name="Land M."/>
            <person name="Hauser L."/>
            <person name="Kyrpides N."/>
            <person name="Mikhailova N."/>
            <person name="Marx C.J."/>
            <person name="Richardson P."/>
        </authorList>
    </citation>
    <scope>NUCLEOTIDE SEQUENCE [LARGE SCALE GENOMIC DNA]</scope>
    <source>
        <strain>ATCC 27329 / DSM 1819 / JCM 2831 / NBRC 15690 / NCIMB 10815 / 0-1</strain>
    </source>
</reference>
<keyword id="KW-0963">Cytoplasm</keyword>
<keyword id="KW-0460">Magnesium</keyword>
<keyword id="KW-0479">Metal-binding</keyword>
<keyword id="KW-0548">Nucleotidyltransferase</keyword>
<keyword id="KW-0694">RNA-binding</keyword>
<keyword id="KW-0808">Transferase</keyword>
<sequence>MFDVQREELMWGDRKLVLETGKVARQADGAVIATYGETSVLATVVAAKEPKPGIDFMPLTVNYQERAYAAGRIPGGYFKREGRPSEKETLVSRLIDRPIRPLFIEGWRNDTQVVVTVLTHDLENDPDIVAMVAASAALTLSGVPFMGPIGGARVGYINGGYRLNPLVTETKEESSLDLVVAGTQDAVLMVESEAKELSEDVMLGAVMFGHKHFQPVIEAIIRLAEKAAKEPRDFKAPENADVEKAVLEVCEAELRAAYTKTVKQERYAAVDAVKAKVMAALCPEGAEKFPAEKVKAAFKEAQSKVVRWNILDSGARIDGRDVKTVRSILSEVGVLPRAHGSALFTRGETQALVVATLGTGEDEQFIDALEGTYKERFLLHYNFPPYSVGETGRMGSPGRREIGHGKLAWRAIRPVLPPAHEFPYTIRVVSEITESNGSSSMASVCGGSLSLMDAGVPLRRPVAGIAMGLILEGERFAVLSDILGDEDHLGDMDFKVAGTDEGVTSLQMDIKIAGITEEIMKIALAQAKDGRAHILAEMAKALTAARPELGEYAPRIETMQIPTDKIRDVIGTGGKVIREIVEKTGAKINIEDTGVVKIASADGKAIKAAYNWIRSIVAEPEVGVIYDGTIVKCMEFGAFVNFFGAKDGLVHISELAAQRVAKVQDVVKEGDKVKVKFLGQDDRGKIRLSMKVVDQQTGEDITDKIKAQRDAERAERGDEPREPREGGRHRGERRREAGE</sequence>